<organism>
    <name type="scientific">Pongo abelii</name>
    <name type="common">Sumatran orangutan</name>
    <name type="synonym">Pongo pygmaeus abelii</name>
    <dbReference type="NCBI Taxonomy" id="9601"/>
    <lineage>
        <taxon>Eukaryota</taxon>
        <taxon>Metazoa</taxon>
        <taxon>Chordata</taxon>
        <taxon>Craniata</taxon>
        <taxon>Vertebrata</taxon>
        <taxon>Euteleostomi</taxon>
        <taxon>Mammalia</taxon>
        <taxon>Eutheria</taxon>
        <taxon>Euarchontoglires</taxon>
        <taxon>Primates</taxon>
        <taxon>Haplorrhini</taxon>
        <taxon>Catarrhini</taxon>
        <taxon>Hominidae</taxon>
        <taxon>Pongo</taxon>
    </lineage>
</organism>
<name>TPIS_PONAB</name>
<gene>
    <name type="primary">TPI1</name>
    <name type="synonym">TPI</name>
</gene>
<reference key="1">
    <citation type="submission" date="2004-11" db="EMBL/GenBank/DDBJ databases">
        <authorList>
            <consortium name="The German cDNA consortium"/>
        </authorList>
    </citation>
    <scope>NUCLEOTIDE SEQUENCE [LARGE SCALE MRNA]</scope>
    <source>
        <tissue>Brain cortex</tissue>
    </source>
</reference>
<comment type="function">
    <text evidence="1">Triosephosphate isomerase is an extremely efficient metabolic enzyme that catalyzes the interconversion between dihydroxyacetone phosphate (DHAP) and D-glyceraldehyde-3-phosphate (G3P) in glycolysis and gluconeogenesis.</text>
</comment>
<comment type="function">
    <text evidence="1">It is also responsible for the non-negligible production of methylglyoxal a reactive cytotoxic side-product that modifies and can alter proteins, DNA and lipids.</text>
</comment>
<comment type="catalytic activity">
    <reaction evidence="1">
        <text>dihydroxyacetone phosphate = methylglyoxal + phosphate</text>
        <dbReference type="Rhea" id="RHEA:17937"/>
        <dbReference type="ChEBI" id="CHEBI:17158"/>
        <dbReference type="ChEBI" id="CHEBI:43474"/>
        <dbReference type="ChEBI" id="CHEBI:57642"/>
        <dbReference type="EC" id="4.2.3.3"/>
    </reaction>
</comment>
<comment type="catalytic activity">
    <reaction evidence="5">
        <text>D-glyceraldehyde 3-phosphate = dihydroxyacetone phosphate</text>
        <dbReference type="Rhea" id="RHEA:18585"/>
        <dbReference type="ChEBI" id="CHEBI:57642"/>
        <dbReference type="ChEBI" id="CHEBI:59776"/>
        <dbReference type="EC" id="5.3.1.1"/>
    </reaction>
</comment>
<comment type="pathway">
    <text evidence="5">Carbohydrate degradation; glycolysis; D-glyceraldehyde 3-phosphate from glycerone phosphate: step 1/1.</text>
</comment>
<comment type="pathway">
    <text evidence="5">Carbohydrate biosynthesis; gluconeogenesis.</text>
</comment>
<comment type="subunit">
    <text evidence="5">Homodimer.</text>
</comment>
<comment type="subcellular location">
    <subcellularLocation>
        <location evidence="5">Cytoplasm</location>
    </subcellularLocation>
</comment>
<comment type="similarity">
    <text evidence="6">Belongs to the triosephosphate isomerase family.</text>
</comment>
<feature type="initiator methionine" description="Removed" evidence="4">
    <location>
        <position position="1"/>
    </location>
</feature>
<feature type="chain" id="PRO_0000345139" description="Triosephosphate isomerase">
    <location>
        <begin position="2"/>
        <end position="249"/>
    </location>
</feature>
<feature type="active site" description="Electrophile" evidence="5">
    <location>
        <position position="96"/>
    </location>
</feature>
<feature type="active site" description="Proton acceptor" evidence="5">
    <location>
        <position position="166"/>
    </location>
</feature>
<feature type="binding site" evidence="5">
    <location>
        <position position="12"/>
    </location>
    <ligand>
        <name>substrate</name>
    </ligand>
</feature>
<feature type="binding site" evidence="5">
    <location>
        <position position="14"/>
    </location>
    <ligand>
        <name>substrate</name>
    </ligand>
</feature>
<feature type="modified residue" description="N6-acetyllysine" evidence="4">
    <location>
        <position position="14"/>
    </location>
</feature>
<feature type="modified residue" description="3'-nitrotyrosine" evidence="2">
    <location>
        <position position="68"/>
    </location>
</feature>
<feature type="modified residue" description="Phosphoserine" evidence="4">
    <location>
        <position position="80"/>
    </location>
</feature>
<feature type="modified residue" description="Phosphoserine" evidence="3">
    <location>
        <position position="106"/>
    </location>
</feature>
<feature type="modified residue" description="N6-succinyllysine" evidence="2">
    <location>
        <position position="149"/>
    </location>
</feature>
<feature type="modified residue" description="N6-acetyllysine; alternate" evidence="2">
    <location>
        <position position="156"/>
    </location>
</feature>
<feature type="modified residue" description="N6-succinyllysine; alternate" evidence="2">
    <location>
        <position position="156"/>
    </location>
</feature>
<feature type="modified residue" description="Phosphoserine" evidence="2">
    <location>
        <position position="159"/>
    </location>
</feature>
<feature type="modified residue" description="Phosphothreonine" evidence="2">
    <location>
        <position position="173"/>
    </location>
</feature>
<feature type="modified residue" description="N6-acetyllysine; alternate" evidence="4">
    <location>
        <position position="194"/>
    </location>
</feature>
<feature type="modified residue" description="N6-methyllysine; alternate" evidence="4">
    <location>
        <position position="194"/>
    </location>
</feature>
<feature type="modified residue" description="N6-succinyllysine; alternate" evidence="2">
    <location>
        <position position="194"/>
    </location>
</feature>
<feature type="modified residue" description="Phosphoserine" evidence="3">
    <location>
        <position position="198"/>
    </location>
</feature>
<feature type="modified residue" description="3'-nitrotyrosine" evidence="2">
    <location>
        <position position="209"/>
    </location>
</feature>
<feature type="modified residue" description="Phosphoserine" evidence="4">
    <location>
        <position position="212"/>
    </location>
</feature>
<feature type="modified residue" description="Phosphothreonine" evidence="4">
    <location>
        <position position="214"/>
    </location>
</feature>
<feature type="modified residue" description="Phosphoserine" evidence="4">
    <location>
        <position position="223"/>
    </location>
</feature>
<feature type="modified residue" description="N6-acetyllysine" evidence="4">
    <location>
        <position position="238"/>
    </location>
</feature>
<feature type="cross-link" description="Glycyl lysine isopeptide (Lys-Gly) (interchain with G-Cter in SUMO1)" evidence="4">
    <location>
        <position position="142"/>
    </location>
</feature>
<keyword id="KW-0007">Acetylation</keyword>
<keyword id="KW-0963">Cytoplasm</keyword>
<keyword id="KW-0312">Gluconeogenesis</keyword>
<keyword id="KW-0324">Glycolysis</keyword>
<keyword id="KW-0413">Isomerase</keyword>
<keyword id="KW-1017">Isopeptide bond</keyword>
<keyword id="KW-0456">Lyase</keyword>
<keyword id="KW-0488">Methylation</keyword>
<keyword id="KW-0944">Nitration</keyword>
<keyword id="KW-0597">Phosphoprotein</keyword>
<keyword id="KW-1185">Reference proteome</keyword>
<keyword id="KW-0832">Ubl conjugation</keyword>
<proteinExistence type="evidence at transcript level"/>
<dbReference type="EC" id="5.3.1.1" evidence="5"/>
<dbReference type="EC" id="4.2.3.3" evidence="1"/>
<dbReference type="EMBL" id="CR859568">
    <property type="protein sequence ID" value="CAH91732.1"/>
    <property type="molecule type" value="mRNA"/>
</dbReference>
<dbReference type="RefSeq" id="NP_001126005.1">
    <property type="nucleotide sequence ID" value="NM_001132533.2"/>
</dbReference>
<dbReference type="SMR" id="Q5R928"/>
<dbReference type="FunCoup" id="Q5R928">
    <property type="interactions" value="1481"/>
</dbReference>
<dbReference type="STRING" id="9601.ENSPPYP00000004794"/>
<dbReference type="GeneID" id="100172948"/>
<dbReference type="KEGG" id="pon:100172948"/>
<dbReference type="CTD" id="7167"/>
<dbReference type="eggNOG" id="KOG1643">
    <property type="taxonomic scope" value="Eukaryota"/>
</dbReference>
<dbReference type="InParanoid" id="Q5R928"/>
<dbReference type="OrthoDB" id="9472880at2759"/>
<dbReference type="UniPathway" id="UPA00109">
    <property type="reaction ID" value="UER00189"/>
</dbReference>
<dbReference type="UniPathway" id="UPA00138"/>
<dbReference type="Proteomes" id="UP000001595">
    <property type="component" value="Unplaced"/>
</dbReference>
<dbReference type="GO" id="GO:0005829">
    <property type="term" value="C:cytosol"/>
    <property type="evidence" value="ECO:0007669"/>
    <property type="project" value="TreeGrafter"/>
</dbReference>
<dbReference type="GO" id="GO:0008929">
    <property type="term" value="F:methylglyoxal synthase activity"/>
    <property type="evidence" value="ECO:0000250"/>
    <property type="project" value="UniProtKB"/>
</dbReference>
<dbReference type="GO" id="GO:0042803">
    <property type="term" value="F:protein homodimerization activity"/>
    <property type="evidence" value="ECO:0000250"/>
    <property type="project" value="UniProtKB"/>
</dbReference>
<dbReference type="GO" id="GO:0004807">
    <property type="term" value="F:triose-phosphate isomerase activity"/>
    <property type="evidence" value="ECO:0000250"/>
    <property type="project" value="UniProtKB"/>
</dbReference>
<dbReference type="GO" id="GO:0006094">
    <property type="term" value="P:gluconeogenesis"/>
    <property type="evidence" value="ECO:0007669"/>
    <property type="project" value="UniProtKB-UniPathway"/>
</dbReference>
<dbReference type="GO" id="GO:0046166">
    <property type="term" value="P:glyceraldehyde-3-phosphate biosynthetic process"/>
    <property type="evidence" value="ECO:0000250"/>
    <property type="project" value="UniProtKB"/>
</dbReference>
<dbReference type="GO" id="GO:0019563">
    <property type="term" value="P:glycerol catabolic process"/>
    <property type="evidence" value="ECO:0007669"/>
    <property type="project" value="TreeGrafter"/>
</dbReference>
<dbReference type="GO" id="GO:0006096">
    <property type="term" value="P:glycolytic process"/>
    <property type="evidence" value="ECO:0007669"/>
    <property type="project" value="UniProtKB-UniPathway"/>
</dbReference>
<dbReference type="GO" id="GO:0019242">
    <property type="term" value="P:methylglyoxal biosynthetic process"/>
    <property type="evidence" value="ECO:0000250"/>
    <property type="project" value="UniProtKB"/>
</dbReference>
<dbReference type="CDD" id="cd00311">
    <property type="entry name" value="TIM"/>
    <property type="match status" value="1"/>
</dbReference>
<dbReference type="FunFam" id="3.20.20.70:FF:000025">
    <property type="entry name" value="Triosephosphate isomerase"/>
    <property type="match status" value="1"/>
</dbReference>
<dbReference type="Gene3D" id="3.20.20.70">
    <property type="entry name" value="Aldolase class I"/>
    <property type="match status" value="1"/>
</dbReference>
<dbReference type="HAMAP" id="MF_00147_B">
    <property type="entry name" value="TIM_B"/>
    <property type="match status" value="1"/>
</dbReference>
<dbReference type="InterPro" id="IPR013785">
    <property type="entry name" value="Aldolase_TIM"/>
</dbReference>
<dbReference type="InterPro" id="IPR035990">
    <property type="entry name" value="TIM_sf"/>
</dbReference>
<dbReference type="InterPro" id="IPR022896">
    <property type="entry name" value="TrioseP_Isoase_bac/euk"/>
</dbReference>
<dbReference type="InterPro" id="IPR000652">
    <property type="entry name" value="Triosephosphate_isomerase"/>
</dbReference>
<dbReference type="InterPro" id="IPR020861">
    <property type="entry name" value="Triosephosphate_isomerase_AS"/>
</dbReference>
<dbReference type="NCBIfam" id="TIGR00419">
    <property type="entry name" value="tim"/>
    <property type="match status" value="1"/>
</dbReference>
<dbReference type="PANTHER" id="PTHR21139">
    <property type="entry name" value="TRIOSEPHOSPHATE ISOMERASE"/>
    <property type="match status" value="1"/>
</dbReference>
<dbReference type="PANTHER" id="PTHR21139:SF2">
    <property type="entry name" value="TRIOSEPHOSPHATE ISOMERASE"/>
    <property type="match status" value="1"/>
</dbReference>
<dbReference type="Pfam" id="PF00121">
    <property type="entry name" value="TIM"/>
    <property type="match status" value="1"/>
</dbReference>
<dbReference type="SUPFAM" id="SSF51351">
    <property type="entry name" value="Triosephosphate isomerase (TIM)"/>
    <property type="match status" value="1"/>
</dbReference>
<dbReference type="PROSITE" id="PS00171">
    <property type="entry name" value="TIM_1"/>
    <property type="match status" value="1"/>
</dbReference>
<dbReference type="PROSITE" id="PS51440">
    <property type="entry name" value="TIM_2"/>
    <property type="match status" value="1"/>
</dbReference>
<sequence length="249" mass="26730">MAPSRKFFVGGNWKMNGRKQSLGELIGTLNAAKVPADTEVVCAPPTAYIDFARQKLDPKIAVAAQNCYKVTNGAFTGEISPGMIKDYGATWVVLGHSERRHVFGESDELIGQKVAHALAEGLGVIACIGEKLDEREAGITEKVVFEQTKVIADNVKDWSKVVLAYEPVWAIGTGKTATPQQAQEVHEKLRGWLKSNVSDAVAQSTRIIYGGSVTGATCKELASQPDVDGFLVGGASLKPEFVDIINAKQ</sequence>
<accession>Q5R928</accession>
<evidence type="ECO:0000250" key="1">
    <source>
        <dbReference type="UniProtKB" id="P00939"/>
    </source>
</evidence>
<evidence type="ECO:0000250" key="2">
    <source>
        <dbReference type="UniProtKB" id="P17751"/>
    </source>
</evidence>
<evidence type="ECO:0000250" key="3">
    <source>
        <dbReference type="UniProtKB" id="P48500"/>
    </source>
</evidence>
<evidence type="ECO:0000250" key="4">
    <source>
        <dbReference type="UniProtKB" id="P60174"/>
    </source>
</evidence>
<evidence type="ECO:0000255" key="5">
    <source>
        <dbReference type="PROSITE-ProRule" id="PRU10127"/>
    </source>
</evidence>
<evidence type="ECO:0000305" key="6"/>
<protein>
    <recommendedName>
        <fullName>Triosephosphate isomerase</fullName>
        <shortName>TIM</shortName>
        <ecNumber evidence="5">5.3.1.1</ecNumber>
    </recommendedName>
    <alternativeName>
        <fullName evidence="1">Methylglyoxal synthase</fullName>
        <ecNumber evidence="1">4.2.3.3</ecNumber>
    </alternativeName>
    <alternativeName>
        <fullName>Triose-phosphate isomerase</fullName>
    </alternativeName>
</protein>